<keyword id="KW-0007">Acetylation</keyword>
<keyword id="KW-0066">ATP synthesis</keyword>
<keyword id="KW-0139">CF(1)</keyword>
<keyword id="KW-0903">Direct protein sequencing</keyword>
<keyword id="KW-0375">Hydrogen ion transport</keyword>
<keyword id="KW-0406">Ion transport</keyword>
<keyword id="KW-0472">Membrane</keyword>
<keyword id="KW-0496">Mitochondrion</keyword>
<keyword id="KW-0999">Mitochondrion inner membrane</keyword>
<keyword id="KW-0597">Phosphoprotein</keyword>
<keyword id="KW-1185">Reference proteome</keyword>
<keyword id="KW-0809">Transit peptide</keyword>
<keyword id="KW-0813">Transport</keyword>
<reference key="1">
    <citation type="journal article" date="2004" name="Genome Res.">
        <title>The status, quality, and expansion of the NIH full-length cDNA project: the Mammalian Gene Collection (MGC).</title>
        <authorList>
            <consortium name="The MGC Project Team"/>
        </authorList>
    </citation>
    <scope>NUCLEOTIDE SEQUENCE [LARGE SCALE MRNA]</scope>
    <source>
        <tissue>Mammary tumor</tissue>
    </source>
</reference>
<reference key="2">
    <citation type="submission" date="2007-04" db="UniProtKB">
        <authorList>
            <person name="Lubec G."/>
            <person name="Kang S.U."/>
        </authorList>
    </citation>
    <scope>PROTEIN SEQUENCE OF 68-79; 91-136; 144-154; 263-277 AND 286-298</scope>
    <scope>IDENTIFICATION BY MASS SPECTROMETRY</scope>
    <source>
        <strain>C57BL/6J</strain>
        <tissue>Brain</tissue>
    </source>
</reference>
<reference key="3">
    <citation type="journal article" date="2010" name="Cell">
        <title>A tissue-specific atlas of mouse protein phosphorylation and expression.</title>
        <authorList>
            <person name="Huttlin E.L."/>
            <person name="Jedrychowski M.P."/>
            <person name="Elias J.E."/>
            <person name="Goswami T."/>
            <person name="Rad R."/>
            <person name="Beausoleil S.A."/>
            <person name="Villen J."/>
            <person name="Haas W."/>
            <person name="Sowa M.E."/>
            <person name="Gygi S.P."/>
        </authorList>
    </citation>
    <scope>PHOSPHORYLATION [LARGE SCALE ANALYSIS] AT SER-146</scope>
    <scope>IDENTIFICATION BY MASS SPECTROMETRY [LARGE SCALE ANALYSIS]</scope>
    <source>
        <tissue>Brain</tissue>
        <tissue>Brown adipose tissue</tissue>
        <tissue>Heart</tissue>
        <tissue>Kidney</tissue>
        <tissue>Liver</tissue>
        <tissue>Lung</tissue>
        <tissue>Pancreas</tissue>
        <tissue>Spleen</tissue>
        <tissue>Testis</tissue>
    </source>
</reference>
<reference key="4">
    <citation type="journal article" date="2013" name="Mol. Cell">
        <title>SIRT5-mediated lysine desuccinylation impacts diverse metabolic pathways.</title>
        <authorList>
            <person name="Park J."/>
            <person name="Chen Y."/>
            <person name="Tishkoff D.X."/>
            <person name="Peng C."/>
            <person name="Tan M."/>
            <person name="Dai L."/>
            <person name="Xie Z."/>
            <person name="Zhang Y."/>
            <person name="Zwaans B.M."/>
            <person name="Skinner M.E."/>
            <person name="Lombard D.B."/>
            <person name="Zhao Y."/>
        </authorList>
    </citation>
    <scope>SUCCINYLATION [LARGE SCALE ANALYSIS] AT LYS-49; LYS-115; LYS-154 AND LYS-270</scope>
    <scope>IDENTIFICATION BY MASS SPECTROMETRY [LARGE SCALE ANALYSIS]</scope>
    <source>
        <tissue>Liver</tissue>
    </source>
</reference>
<reference key="5">
    <citation type="journal article" date="2013" name="Proc. Natl. Acad. Sci. U.S.A.">
        <title>Label-free quantitative proteomics of the lysine acetylome in mitochondria identifies substrates of SIRT3 in metabolic pathways.</title>
        <authorList>
            <person name="Rardin M.J."/>
            <person name="Newman J.C."/>
            <person name="Held J.M."/>
            <person name="Cusack M.P."/>
            <person name="Sorensen D.J."/>
            <person name="Li B."/>
            <person name="Schilling B."/>
            <person name="Mooney S.D."/>
            <person name="Kahn C.R."/>
            <person name="Verdin E."/>
            <person name="Gibson B.W."/>
        </authorList>
    </citation>
    <scope>ACETYLATION [LARGE SCALE ANALYSIS] AT LYS-39; LYS-115; LYS-138 AND LYS-154</scope>
    <scope>IDENTIFICATION BY MASS SPECTROMETRY [LARGE SCALE ANALYSIS]</scope>
    <source>
        <tissue>Liver</tissue>
    </source>
</reference>
<reference key="6">
    <citation type="journal article" date="2020" name="Nat. Commun.">
        <title>MFSD7C switches mitochondrial ATP synthesis to thermogenesis in response to heme.</title>
        <authorList>
            <person name="Li Y."/>
            <person name="Ivica N.A."/>
            <person name="Dong T."/>
            <person name="Papageorgiou D.P."/>
            <person name="He Y."/>
            <person name="Brown D.R."/>
            <person name="Kleyman M."/>
            <person name="Hu G."/>
            <person name="Chen W.W."/>
            <person name="Sullivan L.B."/>
            <person name="Del Rosario A."/>
            <person name="Hammond P.T."/>
            <person name="Vander Heiden M.G."/>
            <person name="Chen J."/>
        </authorList>
    </citation>
    <scope>INTERACTION WITH FLVCR2</scope>
</reference>
<protein>
    <recommendedName>
        <fullName evidence="5">ATP synthase F(1) complex subunit gamma, mitochondrial</fullName>
    </recommendedName>
    <alternativeName>
        <fullName evidence="3">ATP synthase F1 subunit gamma</fullName>
    </alternativeName>
    <alternativeName>
        <fullName>F-ATPase gamma subunit</fullName>
    </alternativeName>
</protein>
<proteinExistence type="evidence at protein level"/>
<name>ATPG_MOUSE</name>
<dbReference type="EMBL" id="BC010700">
    <property type="protein sequence ID" value="AAH10700.1"/>
    <property type="molecule type" value="mRNA"/>
</dbReference>
<dbReference type="CCDS" id="CCDS38045.1"/>
<dbReference type="RefSeq" id="NP_065640.2">
    <property type="nucleotide sequence ID" value="NM_020615.4"/>
</dbReference>
<dbReference type="SMR" id="Q91VR2"/>
<dbReference type="BioGRID" id="198255">
    <property type="interactions" value="88"/>
</dbReference>
<dbReference type="FunCoup" id="Q91VR2">
    <property type="interactions" value="1762"/>
</dbReference>
<dbReference type="IntAct" id="Q91VR2">
    <property type="interactions" value="14"/>
</dbReference>
<dbReference type="MINT" id="Q91VR2"/>
<dbReference type="STRING" id="10090.ENSMUSP00000110547"/>
<dbReference type="GlyGen" id="Q91VR2">
    <property type="glycosylation" value="2 sites, 1 N-linked glycan (1 site), 1 O-linked glycan (1 site)"/>
</dbReference>
<dbReference type="iPTMnet" id="Q91VR2"/>
<dbReference type="MetOSite" id="Q91VR2"/>
<dbReference type="PhosphoSitePlus" id="Q91VR2"/>
<dbReference type="SwissPalm" id="Q91VR2"/>
<dbReference type="jPOST" id="Q91VR2"/>
<dbReference type="PaxDb" id="10090-ENSMUSP00000110547"/>
<dbReference type="ProteomicsDB" id="273430"/>
<dbReference type="Pumba" id="Q91VR2"/>
<dbReference type="Antibodypedia" id="54768">
    <property type="antibodies" value="276 antibodies from 30 providers"/>
</dbReference>
<dbReference type="DNASU" id="11949"/>
<dbReference type="Ensembl" id="ENSMUST00000114897.9">
    <property type="protein sequence ID" value="ENSMUSP00000110547.3"/>
    <property type="gene ID" value="ENSMUSG00000025781.15"/>
</dbReference>
<dbReference type="GeneID" id="11949"/>
<dbReference type="KEGG" id="mmu:11949"/>
<dbReference type="UCSC" id="uc008ihm.3">
    <property type="organism name" value="mouse"/>
</dbReference>
<dbReference type="AGR" id="MGI:1261437"/>
<dbReference type="CTD" id="509"/>
<dbReference type="MGI" id="MGI:1261437">
    <property type="gene designation" value="Atp5f1c"/>
</dbReference>
<dbReference type="VEuPathDB" id="HostDB:ENSMUSG00000025781"/>
<dbReference type="eggNOG" id="KOG1531">
    <property type="taxonomic scope" value="Eukaryota"/>
</dbReference>
<dbReference type="GeneTree" id="ENSGT00390000006837"/>
<dbReference type="InParanoid" id="Q91VR2"/>
<dbReference type="OMA" id="MQITSAM"/>
<dbReference type="OrthoDB" id="239812at2759"/>
<dbReference type="PhylomeDB" id="Q91VR2"/>
<dbReference type="TreeFam" id="TF105765"/>
<dbReference type="Reactome" id="R-MMU-163210">
    <property type="pathway name" value="Formation of ATP by chemiosmotic coupling"/>
</dbReference>
<dbReference type="Reactome" id="R-MMU-8949613">
    <property type="pathway name" value="Cristae formation"/>
</dbReference>
<dbReference type="Reactome" id="R-MMU-9837999">
    <property type="pathway name" value="Mitochondrial protein degradation"/>
</dbReference>
<dbReference type="BioGRID-ORCS" id="11949">
    <property type="hits" value="26 hits in 78 CRISPR screens"/>
</dbReference>
<dbReference type="CD-CODE" id="CE726F99">
    <property type="entry name" value="Postsynaptic density"/>
</dbReference>
<dbReference type="ChiTaRS" id="Atp5c1">
    <property type="organism name" value="mouse"/>
</dbReference>
<dbReference type="PRO" id="PR:Q91VR2"/>
<dbReference type="Proteomes" id="UP000000589">
    <property type="component" value="Chromosome 2"/>
</dbReference>
<dbReference type="RNAct" id="Q91VR2">
    <property type="molecule type" value="protein"/>
</dbReference>
<dbReference type="Bgee" id="ENSMUSG00000025781">
    <property type="expression patterns" value="Expressed in myocardium of ventricle and 150 other cell types or tissues"/>
</dbReference>
<dbReference type="ExpressionAtlas" id="Q91VR2">
    <property type="expression patterns" value="baseline and differential"/>
</dbReference>
<dbReference type="GO" id="GO:0005743">
    <property type="term" value="C:mitochondrial inner membrane"/>
    <property type="evidence" value="ECO:0007005"/>
    <property type="project" value="MGI"/>
</dbReference>
<dbReference type="GO" id="GO:0005739">
    <property type="term" value="C:mitochondrion"/>
    <property type="evidence" value="ECO:0007005"/>
    <property type="project" value="MGI"/>
</dbReference>
<dbReference type="GO" id="GO:0043209">
    <property type="term" value="C:myelin sheath"/>
    <property type="evidence" value="ECO:0007005"/>
    <property type="project" value="UniProtKB"/>
</dbReference>
<dbReference type="GO" id="GO:0045259">
    <property type="term" value="C:proton-transporting ATP synthase complex"/>
    <property type="evidence" value="ECO:0000250"/>
    <property type="project" value="UniProtKB"/>
</dbReference>
<dbReference type="GO" id="GO:0046933">
    <property type="term" value="F:proton-transporting ATP synthase activity, rotational mechanism"/>
    <property type="evidence" value="ECO:0007669"/>
    <property type="project" value="Ensembl"/>
</dbReference>
<dbReference type="GO" id="GO:0042776">
    <property type="term" value="P:proton motive force-driven mitochondrial ATP synthesis"/>
    <property type="evidence" value="ECO:0007669"/>
    <property type="project" value="Ensembl"/>
</dbReference>
<dbReference type="CDD" id="cd12151">
    <property type="entry name" value="F1-ATPase_gamma"/>
    <property type="match status" value="1"/>
</dbReference>
<dbReference type="FunFam" id="1.10.287.80:FF:000007">
    <property type="entry name" value="ATP synthase gamma chain"/>
    <property type="match status" value="1"/>
</dbReference>
<dbReference type="FunFam" id="3.40.1380.10:FF:000003">
    <property type="entry name" value="ATP synthase subunit gamma"/>
    <property type="match status" value="1"/>
</dbReference>
<dbReference type="FunFam" id="1.10.287.80:FF:000013">
    <property type="entry name" value="ATP synthase subunit gamma, mitochondrial"/>
    <property type="match status" value="1"/>
</dbReference>
<dbReference type="Gene3D" id="3.40.1380.10">
    <property type="match status" value="1"/>
</dbReference>
<dbReference type="Gene3D" id="1.10.287.80">
    <property type="entry name" value="ATP synthase, gamma subunit, helix hairpin domain"/>
    <property type="match status" value="1"/>
</dbReference>
<dbReference type="InterPro" id="IPR035968">
    <property type="entry name" value="ATP_synth_F1_ATPase_gsu"/>
</dbReference>
<dbReference type="InterPro" id="IPR000131">
    <property type="entry name" value="ATP_synth_F1_gsu"/>
</dbReference>
<dbReference type="InterPro" id="IPR023632">
    <property type="entry name" value="ATP_synth_F1_gsu_CS"/>
</dbReference>
<dbReference type="NCBIfam" id="TIGR01146">
    <property type="entry name" value="ATPsyn_F1gamma"/>
    <property type="match status" value="1"/>
</dbReference>
<dbReference type="PANTHER" id="PTHR11693">
    <property type="entry name" value="ATP SYNTHASE GAMMA CHAIN"/>
    <property type="match status" value="1"/>
</dbReference>
<dbReference type="PANTHER" id="PTHR11693:SF22">
    <property type="entry name" value="ATP SYNTHASE SUBUNIT GAMMA, MITOCHONDRIAL"/>
    <property type="match status" value="1"/>
</dbReference>
<dbReference type="Pfam" id="PF00231">
    <property type="entry name" value="ATP-synt"/>
    <property type="match status" value="1"/>
</dbReference>
<dbReference type="PIRSF" id="PIRSF039089">
    <property type="entry name" value="ATP_synthase_gamma"/>
    <property type="match status" value="1"/>
</dbReference>
<dbReference type="PRINTS" id="PR00126">
    <property type="entry name" value="ATPASEGAMMA"/>
</dbReference>
<dbReference type="SUPFAM" id="SSF52943">
    <property type="entry name" value="ATP synthase (F1-ATPase), gamma subunit"/>
    <property type="match status" value="1"/>
</dbReference>
<dbReference type="PROSITE" id="PS00153">
    <property type="entry name" value="ATPASE_GAMMA"/>
    <property type="match status" value="1"/>
</dbReference>
<sequence length="298" mass="32886">MFSRASVVGLSACAVQPQWIQVRNMATLKDITRRLKSIKNIQKITKSMKMVAAAKYARAERELKPARVYGTGSLALYEKADIKAPEDKKKHLIIGVSSDRGLCGAIHSSVAKQMKNEVAALTAAGKEVMIVGVGEKIKGILYRTHSDQFLVSFKDVGRKPPTFGDASVIALELLNSGYEFDEGSIIFNQFKSVISYKTEEKPIFSLNTIATAETMSIYDDIDADVLQNYQEYNLANLIYYSLKESTTSEQSARMTAMDNASKNASDMIDKLTLTFNRTRQAVITKELIEIISGAAALD</sequence>
<feature type="transit peptide" description="Mitochondrion">
    <location>
        <begin position="1"/>
        <end position="25"/>
    </location>
</feature>
<feature type="chain" id="PRO_0000002686" description="ATP synthase F(1) complex subunit gamma, mitochondrial">
    <location>
        <begin position="26"/>
        <end position="298"/>
    </location>
</feature>
<feature type="modified residue" description="N6-acetyllysine" evidence="7">
    <location>
        <position position="39"/>
    </location>
</feature>
<feature type="modified residue" description="N6-succinyllysine" evidence="8">
    <location>
        <position position="49"/>
    </location>
</feature>
<feature type="modified residue" description="N6-acetyllysine" evidence="3">
    <location>
        <position position="55"/>
    </location>
</feature>
<feature type="modified residue" description="N6-acetyllysine; alternate" evidence="7">
    <location>
        <position position="115"/>
    </location>
</feature>
<feature type="modified residue" description="N6-succinyllysine; alternate" evidence="8">
    <location>
        <position position="115"/>
    </location>
</feature>
<feature type="modified residue" description="N6-acetyllysine" evidence="7">
    <location>
        <position position="138"/>
    </location>
</feature>
<feature type="modified residue" description="Phosphoserine" evidence="6">
    <location>
        <position position="146"/>
    </location>
</feature>
<feature type="modified residue" description="N6-acetyllysine; alternate" evidence="7">
    <location>
        <position position="154"/>
    </location>
</feature>
<feature type="modified residue" description="N6-succinyllysine; alternate" evidence="8">
    <location>
        <position position="154"/>
    </location>
</feature>
<feature type="modified residue" description="N6-acetyllysine" evidence="3">
    <location>
        <position position="197"/>
    </location>
</feature>
<feature type="modified residue" description="N6-succinyllysine" evidence="8">
    <location>
        <position position="270"/>
    </location>
</feature>
<evidence type="ECO:0000250" key="1">
    <source>
        <dbReference type="UniProtKB" id="P05631"/>
    </source>
</evidence>
<evidence type="ECO:0000250" key="2">
    <source>
        <dbReference type="UniProtKB" id="P19483"/>
    </source>
</evidence>
<evidence type="ECO:0000250" key="3">
    <source>
        <dbReference type="UniProtKB" id="P36542"/>
    </source>
</evidence>
<evidence type="ECO:0000269" key="4">
    <source>
    </source>
</evidence>
<evidence type="ECO:0000305" key="5"/>
<evidence type="ECO:0007744" key="6">
    <source>
    </source>
</evidence>
<evidence type="ECO:0007744" key="7">
    <source>
    </source>
</evidence>
<evidence type="ECO:0007744" key="8">
    <source>
    </source>
</evidence>
<accession>Q91VR2</accession>
<gene>
    <name evidence="3" type="primary">Atp5f1c</name>
    <name type="synonym">Atp5c1</name>
</gene>
<organism>
    <name type="scientific">Mus musculus</name>
    <name type="common">Mouse</name>
    <dbReference type="NCBI Taxonomy" id="10090"/>
    <lineage>
        <taxon>Eukaryota</taxon>
        <taxon>Metazoa</taxon>
        <taxon>Chordata</taxon>
        <taxon>Craniata</taxon>
        <taxon>Vertebrata</taxon>
        <taxon>Euteleostomi</taxon>
        <taxon>Mammalia</taxon>
        <taxon>Eutheria</taxon>
        <taxon>Euarchontoglires</taxon>
        <taxon>Glires</taxon>
        <taxon>Rodentia</taxon>
        <taxon>Myomorpha</taxon>
        <taxon>Muroidea</taxon>
        <taxon>Muridae</taxon>
        <taxon>Murinae</taxon>
        <taxon>Mus</taxon>
        <taxon>Mus</taxon>
    </lineage>
</organism>
<comment type="function">
    <text evidence="2 3">Subunit gamma, of the mitochondrial membrane ATP synthase complex (F(1)F(0) ATP synthase or Complex V) that produces ATP from ADP in the presence of a proton gradient across the membrane which is generated by electron transport complexes of the respiratory chain. ATP synthase complex consist of a soluble F(1) head domain - the catalytic core - and a membrane F(1) domain - the membrane proton channel. These two domains are linked by a central stalk rotating inside the F(1) region and a stationary peripheral stalk. During catalysis, ATP synthesis in the catalytic domain of F(1) is coupled via a rotary mechanism of the central stalk subunits to proton translocation (By similarity). In vivo, can only synthesize ATP although its ATP hydrolase activity can be activated artificially in vitro (By similarity). With the central stalk subunit delta, is essential for the biogenesis of F(1) catalytic part of the ATP synthase complex namely in the formation of F1 assembly intermediate (By similarity).</text>
</comment>
<comment type="subunit">
    <text evidence="3 4">Component of the ATP synthase complex composed at least of ATP5F1A/subunit alpha, ATP5F1B/subunit beta, ATP5MC1/subunit c (homooctomer), MT-ATP6/subunit a, MT-ATP8/subunit 8, ATP5ME/subunit e, ATP5MF/subunit f, ATP5MG/subunit g, ATP5MK/subunit k, ATP5MJ/subunit j, ATP5F1C/subunit gamma, ATP5F1D/subunit delta, ATP5F1E/subunit epsilon, ATP5PF/subunit F6, ATP5PB/subunit b, ATP5PD/subunit d, ATP5PO/subunit OSCP. ATP synthase complex consists of a soluble F(1) head domain (subunits alpha(3) and beta(3)) - the catalytic core - and a membrane F(0) domain - the membrane proton channel (subunits c, a, 8, e, f, g, k and j). These two domains are linked by a central stalk (subunits gamma, delta, and epsilon) rotating inside the F1 region and a stationary peripheral stalk (subunits F6, b, d, and OSCP) (By similarity). Interacts with FLVCR2; this interaction occurs in the absence of heme and is disrupted upon heme binding (PubMed:32973183).</text>
</comment>
<comment type="subcellular location">
    <subcellularLocation>
        <location evidence="1">Mitochondrion inner membrane</location>
        <topology evidence="1">Peripheral membrane protein</topology>
        <orientation evidence="1">Matrix side</orientation>
    </subcellularLocation>
</comment>
<comment type="similarity">
    <text evidence="5">Belongs to the ATPase gamma chain family.</text>
</comment>